<keyword id="KW-0456">Lyase</keyword>
<keyword id="KW-0501">Molybdenum cofactor biosynthesis</keyword>
<gene>
    <name evidence="1" type="primary">moaC</name>
    <name type="ordered locus">BPP1114</name>
</gene>
<dbReference type="EC" id="4.6.1.17" evidence="1"/>
<dbReference type="EMBL" id="BX640426">
    <property type="protein sequence ID" value="CAE36415.1"/>
    <property type="molecule type" value="Genomic_DNA"/>
</dbReference>
<dbReference type="RefSeq" id="WP_003809338.1">
    <property type="nucleotide sequence ID" value="NC_002928.3"/>
</dbReference>
<dbReference type="SMR" id="Q7WB92"/>
<dbReference type="GeneID" id="93202863"/>
<dbReference type="KEGG" id="bpa:BPP1114"/>
<dbReference type="HOGENOM" id="CLU_074693_1_1_4"/>
<dbReference type="UniPathway" id="UPA00344"/>
<dbReference type="Proteomes" id="UP000001421">
    <property type="component" value="Chromosome"/>
</dbReference>
<dbReference type="GO" id="GO:0061799">
    <property type="term" value="F:cyclic pyranopterin monophosphate synthase activity"/>
    <property type="evidence" value="ECO:0007669"/>
    <property type="project" value="UniProtKB-UniRule"/>
</dbReference>
<dbReference type="GO" id="GO:0006777">
    <property type="term" value="P:Mo-molybdopterin cofactor biosynthetic process"/>
    <property type="evidence" value="ECO:0007669"/>
    <property type="project" value="UniProtKB-UniRule"/>
</dbReference>
<dbReference type="CDD" id="cd01420">
    <property type="entry name" value="MoaC_PE"/>
    <property type="match status" value="1"/>
</dbReference>
<dbReference type="Gene3D" id="3.30.70.640">
    <property type="entry name" value="Molybdopterin cofactor biosynthesis C (MoaC) domain"/>
    <property type="match status" value="1"/>
</dbReference>
<dbReference type="HAMAP" id="MF_01224_B">
    <property type="entry name" value="MoaC_B"/>
    <property type="match status" value="1"/>
</dbReference>
<dbReference type="InterPro" id="IPR023045">
    <property type="entry name" value="MoaC"/>
</dbReference>
<dbReference type="InterPro" id="IPR047594">
    <property type="entry name" value="MoaC_bact/euk"/>
</dbReference>
<dbReference type="InterPro" id="IPR036522">
    <property type="entry name" value="MoaC_sf"/>
</dbReference>
<dbReference type="InterPro" id="IPR050105">
    <property type="entry name" value="MoCo_biosynth_MoaA/MoaC"/>
</dbReference>
<dbReference type="InterPro" id="IPR002820">
    <property type="entry name" value="Mopterin_CF_biosynth-C_dom"/>
</dbReference>
<dbReference type="NCBIfam" id="TIGR00581">
    <property type="entry name" value="moaC"/>
    <property type="match status" value="1"/>
</dbReference>
<dbReference type="NCBIfam" id="NF006870">
    <property type="entry name" value="PRK09364.1"/>
    <property type="match status" value="1"/>
</dbReference>
<dbReference type="PANTHER" id="PTHR22960:SF29">
    <property type="entry name" value="CYCLIC PYRANOPTERIN MONOPHOSPHATE SYNTHASE"/>
    <property type="match status" value="1"/>
</dbReference>
<dbReference type="PANTHER" id="PTHR22960">
    <property type="entry name" value="MOLYBDOPTERIN COFACTOR SYNTHESIS PROTEIN A"/>
    <property type="match status" value="1"/>
</dbReference>
<dbReference type="Pfam" id="PF01967">
    <property type="entry name" value="MoaC"/>
    <property type="match status" value="1"/>
</dbReference>
<dbReference type="SUPFAM" id="SSF55040">
    <property type="entry name" value="Molybdenum cofactor biosynthesis protein C, MoaC"/>
    <property type="match status" value="1"/>
</dbReference>
<organism>
    <name type="scientific">Bordetella parapertussis (strain 12822 / ATCC BAA-587 / NCTC 13253)</name>
    <dbReference type="NCBI Taxonomy" id="257311"/>
    <lineage>
        <taxon>Bacteria</taxon>
        <taxon>Pseudomonadati</taxon>
        <taxon>Pseudomonadota</taxon>
        <taxon>Betaproteobacteria</taxon>
        <taxon>Burkholderiales</taxon>
        <taxon>Alcaligenaceae</taxon>
        <taxon>Bordetella</taxon>
    </lineage>
</organism>
<proteinExistence type="inferred from homology"/>
<sequence>MSTTPTLSHLDESGQIRMVDVGHKTDTDRVAIARGSVRMNATAYGLLTQPGQGKGEVLNTARVAAVLAAKRCAELIPLCHSLPLAFVGIDFELDEAAYSVHIRATCRTQYKTGVEMEAMTACSVAALTIYDMCKAADKGIVIEQIRLQYKAGGKSGEWRND</sequence>
<evidence type="ECO:0000255" key="1">
    <source>
        <dbReference type="HAMAP-Rule" id="MF_01224"/>
    </source>
</evidence>
<accession>Q7WB92</accession>
<name>MOAC_BORPA</name>
<feature type="chain" id="PRO_1000073155" description="Cyclic pyranopterin monophosphate synthase">
    <location>
        <begin position="1"/>
        <end position="161"/>
    </location>
</feature>
<feature type="active site" evidence="1">
    <location>
        <position position="131"/>
    </location>
</feature>
<feature type="binding site" evidence="1">
    <location>
        <begin position="78"/>
        <end position="80"/>
    </location>
    <ligand>
        <name>substrate</name>
    </ligand>
</feature>
<feature type="binding site" evidence="1">
    <location>
        <begin position="116"/>
        <end position="117"/>
    </location>
    <ligand>
        <name>substrate</name>
    </ligand>
</feature>
<comment type="function">
    <text evidence="1">Catalyzes the conversion of (8S)-3',8-cyclo-7,8-dihydroguanosine 5'-triphosphate to cyclic pyranopterin monophosphate (cPMP).</text>
</comment>
<comment type="catalytic activity">
    <reaction evidence="1">
        <text>(8S)-3',8-cyclo-7,8-dihydroguanosine 5'-triphosphate = cyclic pyranopterin phosphate + diphosphate</text>
        <dbReference type="Rhea" id="RHEA:49580"/>
        <dbReference type="ChEBI" id="CHEBI:33019"/>
        <dbReference type="ChEBI" id="CHEBI:59648"/>
        <dbReference type="ChEBI" id="CHEBI:131766"/>
        <dbReference type="EC" id="4.6.1.17"/>
    </reaction>
</comment>
<comment type="pathway">
    <text evidence="1">Cofactor biosynthesis; molybdopterin biosynthesis.</text>
</comment>
<comment type="subunit">
    <text evidence="1">Homohexamer; trimer of dimers.</text>
</comment>
<comment type="similarity">
    <text evidence="1">Belongs to the MoaC family.</text>
</comment>
<reference key="1">
    <citation type="journal article" date="2003" name="Nat. Genet.">
        <title>Comparative analysis of the genome sequences of Bordetella pertussis, Bordetella parapertussis and Bordetella bronchiseptica.</title>
        <authorList>
            <person name="Parkhill J."/>
            <person name="Sebaihia M."/>
            <person name="Preston A."/>
            <person name="Murphy L.D."/>
            <person name="Thomson N.R."/>
            <person name="Harris D.E."/>
            <person name="Holden M.T.G."/>
            <person name="Churcher C.M."/>
            <person name="Bentley S.D."/>
            <person name="Mungall K.L."/>
            <person name="Cerdeno-Tarraga A.-M."/>
            <person name="Temple L."/>
            <person name="James K.D."/>
            <person name="Harris B."/>
            <person name="Quail M.A."/>
            <person name="Achtman M."/>
            <person name="Atkin R."/>
            <person name="Baker S."/>
            <person name="Basham D."/>
            <person name="Bason N."/>
            <person name="Cherevach I."/>
            <person name="Chillingworth T."/>
            <person name="Collins M."/>
            <person name="Cronin A."/>
            <person name="Davis P."/>
            <person name="Doggett J."/>
            <person name="Feltwell T."/>
            <person name="Goble A."/>
            <person name="Hamlin N."/>
            <person name="Hauser H."/>
            <person name="Holroyd S."/>
            <person name="Jagels K."/>
            <person name="Leather S."/>
            <person name="Moule S."/>
            <person name="Norberczak H."/>
            <person name="O'Neil S."/>
            <person name="Ormond D."/>
            <person name="Price C."/>
            <person name="Rabbinowitsch E."/>
            <person name="Rutter S."/>
            <person name="Sanders M."/>
            <person name="Saunders D."/>
            <person name="Seeger K."/>
            <person name="Sharp S."/>
            <person name="Simmonds M."/>
            <person name="Skelton J."/>
            <person name="Squares R."/>
            <person name="Squares S."/>
            <person name="Stevens K."/>
            <person name="Unwin L."/>
            <person name="Whitehead S."/>
            <person name="Barrell B.G."/>
            <person name="Maskell D.J."/>
        </authorList>
    </citation>
    <scope>NUCLEOTIDE SEQUENCE [LARGE SCALE GENOMIC DNA]</scope>
    <source>
        <strain>12822 / ATCC BAA-587 / NCTC 13253</strain>
    </source>
</reference>
<protein>
    <recommendedName>
        <fullName evidence="1">Cyclic pyranopterin monophosphate synthase</fullName>
        <ecNumber evidence="1">4.6.1.17</ecNumber>
    </recommendedName>
    <alternativeName>
        <fullName evidence="1">Molybdenum cofactor biosynthesis protein C</fullName>
    </alternativeName>
</protein>